<reference key="1">
    <citation type="journal article" date="2006" name="PLoS Genet.">
        <title>The complete genome sequence and comparative genome analysis of the high pathogenicity Yersinia enterocolitica strain 8081.</title>
        <authorList>
            <person name="Thomson N.R."/>
            <person name="Howard S."/>
            <person name="Wren B.W."/>
            <person name="Holden M.T.G."/>
            <person name="Crossman L."/>
            <person name="Challis G.L."/>
            <person name="Churcher C."/>
            <person name="Mungall K."/>
            <person name="Brooks K."/>
            <person name="Chillingworth T."/>
            <person name="Feltwell T."/>
            <person name="Abdellah Z."/>
            <person name="Hauser H."/>
            <person name="Jagels K."/>
            <person name="Maddison M."/>
            <person name="Moule S."/>
            <person name="Sanders M."/>
            <person name="Whitehead S."/>
            <person name="Quail M.A."/>
            <person name="Dougan G."/>
            <person name="Parkhill J."/>
            <person name="Prentice M.B."/>
        </authorList>
    </citation>
    <scope>NUCLEOTIDE SEQUENCE [LARGE SCALE GENOMIC DNA]</scope>
    <source>
        <strain>NCTC 13174 / 8081</strain>
    </source>
</reference>
<protein>
    <recommendedName>
        <fullName evidence="1">Nucleoid-associated protein YE3092</fullName>
    </recommendedName>
</protein>
<name>Y3092_YERE8</name>
<comment type="function">
    <text evidence="1">Binds to DNA and alters its conformation. May be involved in regulation of gene expression, nucleoid organization and DNA protection.</text>
</comment>
<comment type="subunit">
    <text evidence="1">Homodimer.</text>
</comment>
<comment type="subcellular location">
    <subcellularLocation>
        <location evidence="1">Cytoplasm</location>
        <location evidence="1">Nucleoid</location>
    </subcellularLocation>
</comment>
<comment type="similarity">
    <text evidence="1">Belongs to the YbaB/EbfC family.</text>
</comment>
<feature type="chain" id="PRO_1000003870" description="Nucleoid-associated protein YE3092">
    <location>
        <begin position="1"/>
        <end position="110"/>
    </location>
</feature>
<sequence length="110" mass="12114">MFGKGGIGNLMKQAQQMQEKMQQMQEEVAKLEVTGESGAGLVKVTINGAHNCRRVEIDPSLLVEEDKEMLEDLIAAAFNDAARRIDETQKEKMASVSSGMQLPPGFKMPF</sequence>
<keyword id="KW-0963">Cytoplasm</keyword>
<keyword id="KW-0238">DNA-binding</keyword>
<organism>
    <name type="scientific">Yersinia enterocolitica serotype O:8 / biotype 1B (strain NCTC 13174 / 8081)</name>
    <dbReference type="NCBI Taxonomy" id="393305"/>
    <lineage>
        <taxon>Bacteria</taxon>
        <taxon>Pseudomonadati</taxon>
        <taxon>Pseudomonadota</taxon>
        <taxon>Gammaproteobacteria</taxon>
        <taxon>Enterobacterales</taxon>
        <taxon>Yersiniaceae</taxon>
        <taxon>Yersinia</taxon>
    </lineage>
</organism>
<accession>A1JNB8</accession>
<dbReference type="EMBL" id="AM286415">
    <property type="protein sequence ID" value="CAL13127.1"/>
    <property type="molecule type" value="Genomic_DNA"/>
</dbReference>
<dbReference type="RefSeq" id="WP_005158176.1">
    <property type="nucleotide sequence ID" value="NC_008800.1"/>
</dbReference>
<dbReference type="RefSeq" id="YP_001007274.1">
    <property type="nucleotide sequence ID" value="NC_008800.1"/>
</dbReference>
<dbReference type="SMR" id="A1JNB8"/>
<dbReference type="KEGG" id="yen:YE3092"/>
<dbReference type="PATRIC" id="fig|393305.7.peg.3290"/>
<dbReference type="eggNOG" id="COG0718">
    <property type="taxonomic scope" value="Bacteria"/>
</dbReference>
<dbReference type="HOGENOM" id="CLU_140930_0_0_6"/>
<dbReference type="OrthoDB" id="9808738at2"/>
<dbReference type="Proteomes" id="UP000000642">
    <property type="component" value="Chromosome"/>
</dbReference>
<dbReference type="GO" id="GO:0043590">
    <property type="term" value="C:bacterial nucleoid"/>
    <property type="evidence" value="ECO:0007669"/>
    <property type="project" value="UniProtKB-UniRule"/>
</dbReference>
<dbReference type="GO" id="GO:0005829">
    <property type="term" value="C:cytosol"/>
    <property type="evidence" value="ECO:0007669"/>
    <property type="project" value="TreeGrafter"/>
</dbReference>
<dbReference type="GO" id="GO:0003677">
    <property type="term" value="F:DNA binding"/>
    <property type="evidence" value="ECO:0007669"/>
    <property type="project" value="UniProtKB-UniRule"/>
</dbReference>
<dbReference type="FunFam" id="3.30.1310.10:FF:000001">
    <property type="entry name" value="Nucleoid-associated protein YbaB"/>
    <property type="match status" value="1"/>
</dbReference>
<dbReference type="Gene3D" id="3.30.1310.10">
    <property type="entry name" value="Nucleoid-associated protein YbaB-like domain"/>
    <property type="match status" value="1"/>
</dbReference>
<dbReference type="HAMAP" id="MF_00274">
    <property type="entry name" value="DNA_YbaB_EbfC"/>
    <property type="match status" value="1"/>
</dbReference>
<dbReference type="InterPro" id="IPR036894">
    <property type="entry name" value="YbaB-like_sf"/>
</dbReference>
<dbReference type="InterPro" id="IPR004401">
    <property type="entry name" value="YbaB/EbfC"/>
</dbReference>
<dbReference type="NCBIfam" id="TIGR00103">
    <property type="entry name" value="DNA_YbaB_EbfC"/>
    <property type="match status" value="1"/>
</dbReference>
<dbReference type="PANTHER" id="PTHR33449">
    <property type="entry name" value="NUCLEOID-ASSOCIATED PROTEIN YBAB"/>
    <property type="match status" value="1"/>
</dbReference>
<dbReference type="PANTHER" id="PTHR33449:SF1">
    <property type="entry name" value="NUCLEOID-ASSOCIATED PROTEIN YBAB"/>
    <property type="match status" value="1"/>
</dbReference>
<dbReference type="Pfam" id="PF02575">
    <property type="entry name" value="YbaB_DNA_bd"/>
    <property type="match status" value="1"/>
</dbReference>
<dbReference type="PIRSF" id="PIRSF004555">
    <property type="entry name" value="UCP004555"/>
    <property type="match status" value="1"/>
</dbReference>
<dbReference type="SUPFAM" id="SSF82607">
    <property type="entry name" value="YbaB-like"/>
    <property type="match status" value="1"/>
</dbReference>
<gene>
    <name type="ordered locus">YE3092</name>
</gene>
<evidence type="ECO:0000255" key="1">
    <source>
        <dbReference type="HAMAP-Rule" id="MF_00274"/>
    </source>
</evidence>
<proteinExistence type="inferred from homology"/>